<organism>
    <name type="scientific">Cryptococcus neoformans var. neoformans serotype D (strain JEC21 / ATCC MYA-565)</name>
    <name type="common">Filobasidiella neoformans</name>
    <dbReference type="NCBI Taxonomy" id="214684"/>
    <lineage>
        <taxon>Eukaryota</taxon>
        <taxon>Fungi</taxon>
        <taxon>Dikarya</taxon>
        <taxon>Basidiomycota</taxon>
        <taxon>Agaricomycotina</taxon>
        <taxon>Tremellomycetes</taxon>
        <taxon>Tremellales</taxon>
        <taxon>Cryptococcaceae</taxon>
        <taxon>Cryptococcus</taxon>
        <taxon>Cryptococcus neoformans species complex</taxon>
    </lineage>
</organism>
<proteinExistence type="inferred from homology"/>
<reference key="1">
    <citation type="journal article" date="2005" name="Science">
        <title>The genome of the basidiomycetous yeast and human pathogen Cryptococcus neoformans.</title>
        <authorList>
            <person name="Loftus B.J."/>
            <person name="Fung E."/>
            <person name="Roncaglia P."/>
            <person name="Rowley D."/>
            <person name="Amedeo P."/>
            <person name="Bruno D."/>
            <person name="Vamathevan J."/>
            <person name="Miranda M."/>
            <person name="Anderson I.J."/>
            <person name="Fraser J.A."/>
            <person name="Allen J.E."/>
            <person name="Bosdet I.E."/>
            <person name="Brent M.R."/>
            <person name="Chiu R."/>
            <person name="Doering T.L."/>
            <person name="Donlin M.J."/>
            <person name="D'Souza C.A."/>
            <person name="Fox D.S."/>
            <person name="Grinberg V."/>
            <person name="Fu J."/>
            <person name="Fukushima M."/>
            <person name="Haas B.J."/>
            <person name="Huang J.C."/>
            <person name="Janbon G."/>
            <person name="Jones S.J.M."/>
            <person name="Koo H.L."/>
            <person name="Krzywinski M.I."/>
            <person name="Kwon-Chung K.J."/>
            <person name="Lengeler K.B."/>
            <person name="Maiti R."/>
            <person name="Marra M.A."/>
            <person name="Marra R.E."/>
            <person name="Mathewson C.A."/>
            <person name="Mitchell T.G."/>
            <person name="Pertea M."/>
            <person name="Riggs F.R."/>
            <person name="Salzberg S.L."/>
            <person name="Schein J.E."/>
            <person name="Shvartsbeyn A."/>
            <person name="Shin H."/>
            <person name="Shumway M."/>
            <person name="Specht C.A."/>
            <person name="Suh B.B."/>
            <person name="Tenney A."/>
            <person name="Utterback T.R."/>
            <person name="Wickes B.L."/>
            <person name="Wortman J.R."/>
            <person name="Wye N.H."/>
            <person name="Kronstad J.W."/>
            <person name="Lodge J.K."/>
            <person name="Heitman J."/>
            <person name="Davis R.W."/>
            <person name="Fraser C.M."/>
            <person name="Hyman R.W."/>
        </authorList>
    </citation>
    <scope>NUCLEOTIDE SEQUENCE [LARGE SCALE GENOMIC DNA]</scope>
    <source>
        <strain>JEC21 / ATCC MYA-565</strain>
    </source>
</reference>
<name>YSH1_CRYNJ</name>
<protein>
    <recommendedName>
        <fullName>Endoribonuclease YSH1</fullName>
        <ecNumber>3.1.27.-</ecNumber>
    </recommendedName>
    <alternativeName>
        <fullName>mRNA 3'-end-processing protein YSH1</fullName>
    </alternativeName>
</protein>
<keyword id="KW-0255">Endonuclease</keyword>
<keyword id="KW-0378">Hydrolase</keyword>
<keyword id="KW-0479">Metal-binding</keyword>
<keyword id="KW-0507">mRNA processing</keyword>
<keyword id="KW-0540">Nuclease</keyword>
<keyword id="KW-0539">Nucleus</keyword>
<keyword id="KW-1185">Reference proteome</keyword>
<keyword id="KW-0862">Zinc</keyword>
<gene>
    <name type="primary">YSH1</name>
    <name type="ordered locus">CNH02710</name>
</gene>
<comment type="function">
    <text evidence="1">Component of the cleavage factor I (CF I) involved in pre-mRNA 3'-end processing.</text>
</comment>
<comment type="subcellular location">
    <subcellularLocation>
        <location evidence="1">Nucleus</location>
    </subcellularLocation>
</comment>
<comment type="similarity">
    <text evidence="4">Belongs to the metallo-beta-lactamase superfamily. RNA-metabolizing metallo-beta-lactamase-like family. CPSF2/YSH1 subfamily.</text>
</comment>
<dbReference type="EC" id="3.1.27.-"/>
<dbReference type="EMBL" id="AE017348">
    <property type="protein sequence ID" value="AAW45137.1"/>
    <property type="molecule type" value="Genomic_DNA"/>
</dbReference>
<dbReference type="RefSeq" id="XP_572444.1">
    <property type="nucleotide sequence ID" value="XM_572444.1"/>
</dbReference>
<dbReference type="SMR" id="P0CM88"/>
<dbReference type="FunCoup" id="P0CM88">
    <property type="interactions" value="670"/>
</dbReference>
<dbReference type="STRING" id="214684.P0CM88"/>
<dbReference type="PaxDb" id="214684-P0CM88"/>
<dbReference type="EnsemblFungi" id="AAW45137">
    <property type="protein sequence ID" value="AAW45137"/>
    <property type="gene ID" value="CNH02710"/>
</dbReference>
<dbReference type="GeneID" id="3259267"/>
<dbReference type="KEGG" id="cne:CNH02710"/>
<dbReference type="VEuPathDB" id="FungiDB:CNH02710"/>
<dbReference type="eggNOG" id="KOG1137">
    <property type="taxonomic scope" value="Eukaryota"/>
</dbReference>
<dbReference type="HOGENOM" id="CLU_009673_2_2_1"/>
<dbReference type="InParanoid" id="P0CM88"/>
<dbReference type="OMA" id="CKQHITL"/>
<dbReference type="OrthoDB" id="10249535at2759"/>
<dbReference type="Proteomes" id="UP000002149">
    <property type="component" value="Chromosome 8"/>
</dbReference>
<dbReference type="GO" id="GO:0005847">
    <property type="term" value="C:mRNA cleavage and polyadenylation specificity factor complex"/>
    <property type="evidence" value="ECO:0000318"/>
    <property type="project" value="GO_Central"/>
</dbReference>
<dbReference type="GO" id="GO:0004534">
    <property type="term" value="F:5'-3' RNA exonuclease activity"/>
    <property type="evidence" value="ECO:0000318"/>
    <property type="project" value="GO_Central"/>
</dbReference>
<dbReference type="GO" id="GO:0046872">
    <property type="term" value="F:metal ion binding"/>
    <property type="evidence" value="ECO:0007669"/>
    <property type="project" value="UniProtKB-KW"/>
</dbReference>
<dbReference type="GO" id="GO:0003723">
    <property type="term" value="F:RNA binding"/>
    <property type="evidence" value="ECO:0000318"/>
    <property type="project" value="GO_Central"/>
</dbReference>
<dbReference type="GO" id="GO:0004521">
    <property type="term" value="F:RNA endonuclease activity"/>
    <property type="evidence" value="ECO:0000318"/>
    <property type="project" value="GO_Central"/>
</dbReference>
<dbReference type="GO" id="GO:0006398">
    <property type="term" value="P:mRNA 3'-end processing by stem-loop binding and cleavage"/>
    <property type="evidence" value="ECO:0000318"/>
    <property type="project" value="GO_Central"/>
</dbReference>
<dbReference type="Gene3D" id="3.40.50.10890">
    <property type="match status" value="1"/>
</dbReference>
<dbReference type="Gene3D" id="3.60.15.10">
    <property type="entry name" value="Ribonuclease Z/Hydroxyacylglutathione hydrolase-like"/>
    <property type="match status" value="1"/>
</dbReference>
<dbReference type="InterPro" id="IPR022712">
    <property type="entry name" value="Beta_Casp"/>
</dbReference>
<dbReference type="InterPro" id="IPR021718">
    <property type="entry name" value="CPSF73-100_C"/>
</dbReference>
<dbReference type="InterPro" id="IPR050698">
    <property type="entry name" value="MBL"/>
</dbReference>
<dbReference type="InterPro" id="IPR001279">
    <property type="entry name" value="Metallo-B-lactamas"/>
</dbReference>
<dbReference type="InterPro" id="IPR036866">
    <property type="entry name" value="RibonucZ/Hydroxyglut_hydro"/>
</dbReference>
<dbReference type="InterPro" id="IPR011108">
    <property type="entry name" value="RMMBL"/>
</dbReference>
<dbReference type="PANTHER" id="PTHR11203">
    <property type="entry name" value="CLEAVAGE AND POLYADENYLATION SPECIFICITY FACTOR FAMILY MEMBER"/>
    <property type="match status" value="1"/>
</dbReference>
<dbReference type="PANTHER" id="PTHR11203:SF11">
    <property type="entry name" value="CLEAVAGE AND POLYADENYLATION SPECIFICITY FACTOR SUBUNIT 3"/>
    <property type="match status" value="1"/>
</dbReference>
<dbReference type="Pfam" id="PF10996">
    <property type="entry name" value="Beta-Casp"/>
    <property type="match status" value="1"/>
</dbReference>
<dbReference type="Pfam" id="PF11718">
    <property type="entry name" value="CPSF73-100_C"/>
    <property type="match status" value="1"/>
</dbReference>
<dbReference type="Pfam" id="PF16661">
    <property type="entry name" value="Lactamase_B_6"/>
    <property type="match status" value="1"/>
</dbReference>
<dbReference type="Pfam" id="PF07521">
    <property type="entry name" value="RMMBL"/>
    <property type="match status" value="1"/>
</dbReference>
<dbReference type="SMART" id="SM01027">
    <property type="entry name" value="Beta-Casp"/>
    <property type="match status" value="1"/>
</dbReference>
<dbReference type="SMART" id="SM01098">
    <property type="entry name" value="CPSF73-100_C"/>
    <property type="match status" value="1"/>
</dbReference>
<dbReference type="SMART" id="SM00849">
    <property type="entry name" value="Lactamase_B"/>
    <property type="match status" value="1"/>
</dbReference>
<dbReference type="SUPFAM" id="SSF56281">
    <property type="entry name" value="Metallo-hydrolase/oxidoreductase"/>
    <property type="match status" value="1"/>
</dbReference>
<sequence length="773" mass="85729">MIPRRHHFKPAPQPTVQVLQPPDEDAPSLTITMLGAGQEVGRSCCVIEHRGKKIVCDAGLHPAQPGIGALPFIDELDWSTVDAMLITHFHVDHAAALPYIMEKTNFKDGNGKVYMTHATKAIYGLTMMDTVRLNDQNPDTSGRLYDEADVQSSWQSTIAVDYHQDIVIAGGLRFTPYHAGHVLGASMFLIEIAGLKILYTGDYSREEDRHLVMAEIPPVKPDVMICESTFGVHTLPDRKEKEEQFTTLVANIVRRGGRCLMPIPSFGNGQELALLLDEYWNDHPELQNIPVYFASSLFQRGMRVYKTYVHTMNANIRSRFARRDNPFDFRFVKWLKDPQKLRENKGPCVIMSSPQFMSFGLSRDLLEEWAPDSKNGVIVTGYSIEGTMARTLLSEPDHIESLKGGNVPRRLTVKEISFGAHVDYAQNSKFIQEIGAQHVVLVHGEASQMGRLRAALRDTYAAKGQEINIHTPKNCEPLTLTFRQERMVKAIGSLAATRPEHGTSVKGLLVSKDFSYTLLSPADLHDFTGLSTSTIIQKQGVAISVDWAVVRWYLEGMYGEVEEGVEEEGKAAFIIMNGVQVVQISPTAVELRWKSSSSNDMIADSALALLLGIDGSPATAKLTASPNKHACNHSNSHSHTDLYPHTYPGDKSAKDVASNPEFERLRMFLEAHFGHVEGPNLRPPLPPGADGDGNDDKDKDGDDWLTMDVKLDNQTARIDLISMRVESESAELQKRVETVLEMALTTVKSLSQTFLGGGLDVDMVKVEPNESDS</sequence>
<evidence type="ECO:0000250" key="1"/>
<evidence type="ECO:0000255" key="2"/>
<evidence type="ECO:0000256" key="3">
    <source>
        <dbReference type="SAM" id="MobiDB-lite"/>
    </source>
</evidence>
<evidence type="ECO:0000305" key="4"/>
<accession>P0CM88</accession>
<accession>Q55IQ8</accession>
<accession>Q5KCZ0</accession>
<feature type="chain" id="PRO_0000238900" description="Endoribonuclease YSH1">
    <location>
        <begin position="1"/>
        <end position="773"/>
    </location>
</feature>
<feature type="region of interest" description="Disordered" evidence="3">
    <location>
        <begin position="1"/>
        <end position="22"/>
    </location>
</feature>
<feature type="region of interest" description="Disordered" evidence="3">
    <location>
        <begin position="624"/>
        <end position="656"/>
    </location>
</feature>
<feature type="region of interest" description="Disordered" evidence="3">
    <location>
        <begin position="677"/>
        <end position="702"/>
    </location>
</feature>
<feature type="compositionally biased region" description="Polar residues" evidence="3">
    <location>
        <begin position="624"/>
        <end position="637"/>
    </location>
</feature>
<feature type="active site" description="Proton donor" evidence="2">
    <location>
        <position position="421"/>
    </location>
</feature>
<feature type="binding site" evidence="1">
    <location>
        <position position="88"/>
    </location>
    <ligand>
        <name>Zn(2+)</name>
        <dbReference type="ChEBI" id="CHEBI:29105"/>
        <label>1</label>
    </ligand>
</feature>
<feature type="binding site" evidence="1">
    <location>
        <position position="90"/>
    </location>
    <ligand>
        <name>Zn(2+)</name>
        <dbReference type="ChEBI" id="CHEBI:29105"/>
        <label>1</label>
    </ligand>
</feature>
<feature type="binding site" evidence="1">
    <location>
        <position position="92"/>
    </location>
    <ligand>
        <name>Zn(2+)</name>
        <dbReference type="ChEBI" id="CHEBI:29105"/>
        <label>2</label>
    </ligand>
</feature>
<feature type="binding site" evidence="1">
    <location>
        <position position="93"/>
    </location>
    <ligand>
        <name>Zn(2+)</name>
        <dbReference type="ChEBI" id="CHEBI:29105"/>
        <label>2</label>
    </ligand>
</feature>
<feature type="binding site" evidence="1">
    <location>
        <position position="181"/>
    </location>
    <ligand>
        <name>Zn(2+)</name>
        <dbReference type="ChEBI" id="CHEBI:29105"/>
        <label>1</label>
    </ligand>
</feature>
<feature type="binding site" evidence="1">
    <location>
        <position position="202"/>
    </location>
    <ligand>
        <name>Zn(2+)</name>
        <dbReference type="ChEBI" id="CHEBI:29105"/>
        <label>1</label>
    </ligand>
</feature>
<feature type="binding site" evidence="1">
    <location>
        <position position="202"/>
    </location>
    <ligand>
        <name>Zn(2+)</name>
        <dbReference type="ChEBI" id="CHEBI:29105"/>
        <label>2</label>
    </ligand>
</feature>
<feature type="binding site" evidence="1">
    <location>
        <position position="443"/>
    </location>
    <ligand>
        <name>Zn(2+)</name>
        <dbReference type="ChEBI" id="CHEBI:29105"/>
        <label>2</label>
    </ligand>
</feature>